<name>S2542_DANRE</name>
<sequence length="321" mass="35336">MGNVVQERQGALAQGEVLPRPAASQSEGFKQGRSVLNSLVSGAFAGAVAKTAVAPLDRTKIIFQVSSNRFSAKEAYRLIYRTYLKDGFFSLWRGNSATMVRVIPYAAIQFCAHEQYKGILGKYYGFQGKALPPVPRLLAGSLAGTTAAIITYPLDMVRARMAVTPKEMYSNIMDVFVRISREEGLKTLYRGFTPTILGVVPYAGLSFFTYETLKKTHAEKTGRAHPFPYERLVFGACAGLIGQSASYPLDVVRRRMQTAGVTGHTYSTVLGTMREIVAEEGIVRGLYKGLSMNWVKGPIAVGISFMTFDLTQILLRKFQLL</sequence>
<protein>
    <recommendedName>
        <fullName>Mitochondrial coenzyme A transporter SLC25A42</fullName>
    </recommendedName>
    <alternativeName>
        <fullName>Solute carrier family 25 member 42</fullName>
    </alternativeName>
</protein>
<gene>
    <name type="primary">slc25a42</name>
    <name type="ORF">zgc:153304</name>
</gene>
<comment type="function">
    <text evidence="1">Mitochondrial carrier mediating the transport of coenzyme A (CoA) in mitochondria in exchange for intramitochondrial (deoxy)adenine nucleotides and adenosine 3',5'-diphosphate.</text>
</comment>
<comment type="catalytic activity">
    <reaction evidence="1">
        <text>ADP(out) + CoA(in) = ADP(in) + CoA(out)</text>
        <dbReference type="Rhea" id="RHEA:72839"/>
        <dbReference type="ChEBI" id="CHEBI:57287"/>
        <dbReference type="ChEBI" id="CHEBI:456216"/>
    </reaction>
</comment>
<comment type="catalytic activity">
    <reaction evidence="1">
        <text>3'-dephospho-CoA(in) + ADP(out) = 3'-dephospho-CoA(out) + ADP(in)</text>
        <dbReference type="Rhea" id="RHEA:72843"/>
        <dbReference type="ChEBI" id="CHEBI:57328"/>
        <dbReference type="ChEBI" id="CHEBI:456216"/>
    </reaction>
</comment>
<comment type="catalytic activity">
    <reaction evidence="1">
        <text>adenosine 3',5'-bisphosphate(in) + ADP(out) = adenosine 3',5'-bisphosphate(out) + ADP(in)</text>
        <dbReference type="Rhea" id="RHEA:72847"/>
        <dbReference type="ChEBI" id="CHEBI:58343"/>
        <dbReference type="ChEBI" id="CHEBI:456216"/>
    </reaction>
</comment>
<comment type="catalytic activity">
    <reaction evidence="1">
        <text>AMP(in) + ADP(out) = AMP(out) + ADP(in)</text>
        <dbReference type="Rhea" id="RHEA:72851"/>
        <dbReference type="ChEBI" id="CHEBI:456215"/>
        <dbReference type="ChEBI" id="CHEBI:456216"/>
    </reaction>
</comment>
<comment type="catalytic activity">
    <reaction evidence="1">
        <text>dADP(in) + ADP(out) = dADP(out) + ADP(in)</text>
        <dbReference type="Rhea" id="RHEA:72855"/>
        <dbReference type="ChEBI" id="CHEBI:57667"/>
        <dbReference type="ChEBI" id="CHEBI:456216"/>
    </reaction>
</comment>
<comment type="catalytic activity">
    <reaction evidence="1">
        <text>ADP(in) + ATP(out) = ADP(out) + ATP(in)</text>
        <dbReference type="Rhea" id="RHEA:34999"/>
        <dbReference type="ChEBI" id="CHEBI:30616"/>
        <dbReference type="ChEBI" id="CHEBI:456216"/>
    </reaction>
</comment>
<comment type="subcellular location">
    <subcellularLocation>
        <location evidence="1">Mitochondrion inner membrane</location>
        <topology evidence="2">Multi-pass membrane protein</topology>
    </subcellularLocation>
</comment>
<comment type="disruption phenotype">
    <text evidence="3">Morphant embryos show morphological anomalies including dorsal curvature and bent tails, severe muscle disorganization, early motor defects, and mitochondrial abnormalities.</text>
</comment>
<comment type="similarity">
    <text evidence="4">Belongs to the mitochondrial carrier (TC 2.A.29) family.</text>
</comment>
<feature type="chain" id="PRO_0000291820" description="Mitochondrial coenzyme A transporter SLC25A42">
    <location>
        <begin position="1"/>
        <end position="321"/>
    </location>
</feature>
<feature type="transmembrane region" description="Helical; Name=1" evidence="2">
    <location>
        <begin position="35"/>
        <end position="55"/>
    </location>
</feature>
<feature type="transmembrane region" description="Helical; Name=2" evidence="2">
    <location>
        <begin position="91"/>
        <end position="111"/>
    </location>
</feature>
<feature type="transmembrane region" description="Helical; Name=3" evidence="2">
    <location>
        <begin position="137"/>
        <end position="154"/>
    </location>
</feature>
<feature type="transmembrane region" description="Helical; Name=4" evidence="2">
    <location>
        <begin position="191"/>
        <end position="208"/>
    </location>
</feature>
<feature type="transmembrane region" description="Helical; Name=5" evidence="2">
    <location>
        <begin position="232"/>
        <end position="252"/>
    </location>
</feature>
<feature type="transmembrane region" description="Helical; Name=6" evidence="2">
    <location>
        <begin position="295"/>
        <end position="315"/>
    </location>
</feature>
<feature type="repeat" description="Solcar 1">
    <location>
        <begin position="33"/>
        <end position="119"/>
    </location>
</feature>
<feature type="repeat" description="Solcar 2">
    <location>
        <begin position="131"/>
        <end position="216"/>
    </location>
</feature>
<feature type="repeat" description="Solcar 3">
    <location>
        <begin position="226"/>
        <end position="314"/>
    </location>
</feature>
<keyword id="KW-0472">Membrane</keyword>
<keyword id="KW-0496">Mitochondrion</keyword>
<keyword id="KW-0999">Mitochondrion inner membrane</keyword>
<keyword id="KW-1185">Reference proteome</keyword>
<keyword id="KW-0677">Repeat</keyword>
<keyword id="KW-0812">Transmembrane</keyword>
<keyword id="KW-1133">Transmembrane helix</keyword>
<keyword id="KW-0813">Transport</keyword>
<dbReference type="EMBL" id="BC122225">
    <property type="protein sequence ID" value="AAI22226.1"/>
    <property type="molecule type" value="mRNA"/>
</dbReference>
<dbReference type="RefSeq" id="NP_001038918.1">
    <property type="nucleotide sequence ID" value="NM_001045453.1"/>
</dbReference>
<dbReference type="SMR" id="Q0P483"/>
<dbReference type="FunCoup" id="Q0P483">
    <property type="interactions" value="715"/>
</dbReference>
<dbReference type="STRING" id="7955.ENSDARP00000147854"/>
<dbReference type="PaxDb" id="7955-ENSDARP00000112426"/>
<dbReference type="GeneID" id="751743"/>
<dbReference type="KEGG" id="dre:751743"/>
<dbReference type="AGR" id="ZFIN:ZDB-GENE-060825-313"/>
<dbReference type="CTD" id="284439"/>
<dbReference type="ZFIN" id="ZDB-GENE-060825-313">
    <property type="gene designation" value="slc25a42"/>
</dbReference>
<dbReference type="eggNOG" id="KOG0752">
    <property type="taxonomic scope" value="Eukaryota"/>
</dbReference>
<dbReference type="InParanoid" id="Q0P483"/>
<dbReference type="OrthoDB" id="270584at2759"/>
<dbReference type="PhylomeDB" id="Q0P483"/>
<dbReference type="Reactome" id="R-DRE-199220">
    <property type="pathway name" value="Vitamin B5 (pantothenate) metabolism"/>
</dbReference>
<dbReference type="PRO" id="PR:Q0P483"/>
<dbReference type="Proteomes" id="UP000000437">
    <property type="component" value="Chromosome 2"/>
</dbReference>
<dbReference type="GO" id="GO:0005743">
    <property type="term" value="C:mitochondrial inner membrane"/>
    <property type="evidence" value="ECO:0007669"/>
    <property type="project" value="UniProtKB-SubCell"/>
</dbReference>
<dbReference type="GO" id="GO:0005739">
    <property type="term" value="C:mitochondrion"/>
    <property type="evidence" value="ECO:0000250"/>
    <property type="project" value="UniProtKB"/>
</dbReference>
<dbReference type="GO" id="GO:0043262">
    <property type="term" value="F:ADP phosphatase activity"/>
    <property type="evidence" value="ECO:0000250"/>
    <property type="project" value="UniProtKB"/>
</dbReference>
<dbReference type="GO" id="GO:0015217">
    <property type="term" value="F:ADP transmembrane transporter activity"/>
    <property type="evidence" value="ECO:0000250"/>
    <property type="project" value="UniProtKB"/>
</dbReference>
<dbReference type="GO" id="GO:0080122">
    <property type="term" value="F:AMP transmembrane transporter activity"/>
    <property type="evidence" value="ECO:0000250"/>
    <property type="project" value="UniProtKB"/>
</dbReference>
<dbReference type="GO" id="GO:0005347">
    <property type="term" value="F:ATP transmembrane transporter activity"/>
    <property type="evidence" value="ECO:0000250"/>
    <property type="project" value="UniProtKB"/>
</dbReference>
<dbReference type="GO" id="GO:0015228">
    <property type="term" value="F:coenzyme A transmembrane transporter activity"/>
    <property type="evidence" value="ECO:0000250"/>
    <property type="project" value="UniProtKB"/>
</dbReference>
<dbReference type="GO" id="GO:0015866">
    <property type="term" value="P:ADP transport"/>
    <property type="evidence" value="ECO:0000250"/>
    <property type="project" value="UniProtKB"/>
</dbReference>
<dbReference type="GO" id="GO:0080121">
    <property type="term" value="P:AMP transport"/>
    <property type="evidence" value="ECO:0000250"/>
    <property type="project" value="UniProtKB"/>
</dbReference>
<dbReference type="GO" id="GO:0015867">
    <property type="term" value="P:ATP transport"/>
    <property type="evidence" value="ECO:0000250"/>
    <property type="project" value="UniProtKB"/>
</dbReference>
<dbReference type="GO" id="GO:0035349">
    <property type="term" value="P:coenzyme A transmembrane transport"/>
    <property type="evidence" value="ECO:0000250"/>
    <property type="project" value="UniProtKB"/>
</dbReference>
<dbReference type="GO" id="GO:0007006">
    <property type="term" value="P:mitochondrial membrane organization"/>
    <property type="evidence" value="ECO:0000315"/>
    <property type="project" value="ZFIN"/>
</dbReference>
<dbReference type="FunFam" id="1.50.40.10:FF:000014">
    <property type="entry name" value="mitochondrial coenzyme A transporter SLC25A42"/>
    <property type="match status" value="1"/>
</dbReference>
<dbReference type="Gene3D" id="1.50.40.10">
    <property type="entry name" value="Mitochondrial carrier domain"/>
    <property type="match status" value="1"/>
</dbReference>
<dbReference type="InterPro" id="IPR002167">
    <property type="entry name" value="GDC-like"/>
</dbReference>
<dbReference type="InterPro" id="IPR002067">
    <property type="entry name" value="Mit_carrier"/>
</dbReference>
<dbReference type="InterPro" id="IPR018108">
    <property type="entry name" value="Mitochondrial_sb/sol_carrier"/>
</dbReference>
<dbReference type="InterPro" id="IPR023395">
    <property type="entry name" value="Mt_carrier_dom_sf"/>
</dbReference>
<dbReference type="PANTHER" id="PTHR24089">
    <property type="entry name" value="SOLUTE CARRIER FAMILY 25"/>
    <property type="match status" value="1"/>
</dbReference>
<dbReference type="Pfam" id="PF00153">
    <property type="entry name" value="Mito_carr"/>
    <property type="match status" value="3"/>
</dbReference>
<dbReference type="PRINTS" id="PR00928">
    <property type="entry name" value="GRAVESDC"/>
</dbReference>
<dbReference type="PRINTS" id="PR00926">
    <property type="entry name" value="MITOCARRIER"/>
</dbReference>
<dbReference type="SUPFAM" id="SSF103506">
    <property type="entry name" value="Mitochondrial carrier"/>
    <property type="match status" value="1"/>
</dbReference>
<dbReference type="PROSITE" id="PS50920">
    <property type="entry name" value="SOLCAR"/>
    <property type="match status" value="3"/>
</dbReference>
<reference key="1">
    <citation type="submission" date="2006-08" db="EMBL/GenBank/DDBJ databases">
        <authorList>
            <consortium name="NIH - Zebrafish Gene Collection (ZGC) project"/>
        </authorList>
    </citation>
    <scope>NUCLEOTIDE SEQUENCE [LARGE SCALE MRNA]</scope>
    <source>
        <tissue>Skin</tissue>
    </source>
</reference>
<reference key="2">
    <citation type="journal article" date="2016" name="Hum. Genet.">
        <title>Mutation of the mitochondrial carrier SLC25A42 causes a novel form of mitochondrial myopathy in humans.</title>
        <authorList>
            <person name="Shamseldin H.E."/>
            <person name="Smith L.L."/>
            <person name="Kentab A."/>
            <person name="Alkhalidi H."/>
            <person name="Summers B."/>
            <person name="Alsedairy H."/>
            <person name="Xiong Y."/>
            <person name="Gupta V.A."/>
            <person name="Alkuraya F.S."/>
        </authorList>
    </citation>
    <scope>DISRUPTION PHENOTYPE</scope>
</reference>
<proteinExistence type="evidence at transcript level"/>
<evidence type="ECO:0000250" key="1">
    <source>
        <dbReference type="UniProtKB" id="Q86VD7"/>
    </source>
</evidence>
<evidence type="ECO:0000255" key="2"/>
<evidence type="ECO:0000269" key="3">
    <source>
    </source>
</evidence>
<evidence type="ECO:0000305" key="4"/>
<accession>Q0P483</accession>
<organism>
    <name type="scientific">Danio rerio</name>
    <name type="common">Zebrafish</name>
    <name type="synonym">Brachydanio rerio</name>
    <dbReference type="NCBI Taxonomy" id="7955"/>
    <lineage>
        <taxon>Eukaryota</taxon>
        <taxon>Metazoa</taxon>
        <taxon>Chordata</taxon>
        <taxon>Craniata</taxon>
        <taxon>Vertebrata</taxon>
        <taxon>Euteleostomi</taxon>
        <taxon>Actinopterygii</taxon>
        <taxon>Neopterygii</taxon>
        <taxon>Teleostei</taxon>
        <taxon>Ostariophysi</taxon>
        <taxon>Cypriniformes</taxon>
        <taxon>Danionidae</taxon>
        <taxon>Danioninae</taxon>
        <taxon>Danio</taxon>
    </lineage>
</organism>